<feature type="chain" id="PRO_1000040456" description="6,7-dimethyl-8-ribityllumazine synthase">
    <location>
        <begin position="1"/>
        <end position="160"/>
    </location>
</feature>
<feature type="active site" description="Proton donor" evidence="1">
    <location>
        <position position="89"/>
    </location>
</feature>
<feature type="binding site" evidence="1">
    <location>
        <position position="27"/>
    </location>
    <ligand>
        <name>5-amino-6-(D-ribitylamino)uracil</name>
        <dbReference type="ChEBI" id="CHEBI:15934"/>
    </ligand>
</feature>
<feature type="binding site" evidence="1">
    <location>
        <begin position="59"/>
        <end position="61"/>
    </location>
    <ligand>
        <name>5-amino-6-(D-ribitylamino)uracil</name>
        <dbReference type="ChEBI" id="CHEBI:15934"/>
    </ligand>
</feature>
<feature type="binding site" evidence="1">
    <location>
        <begin position="81"/>
        <end position="83"/>
    </location>
    <ligand>
        <name>5-amino-6-(D-ribitylamino)uracil</name>
        <dbReference type="ChEBI" id="CHEBI:15934"/>
    </ligand>
</feature>
<feature type="binding site" evidence="1">
    <location>
        <begin position="86"/>
        <end position="87"/>
    </location>
    <ligand>
        <name>(2S)-2-hydroxy-3-oxobutyl phosphate</name>
        <dbReference type="ChEBI" id="CHEBI:58830"/>
    </ligand>
</feature>
<feature type="binding site" evidence="1">
    <location>
        <position position="114"/>
    </location>
    <ligand>
        <name>5-amino-6-(D-ribitylamino)uracil</name>
        <dbReference type="ChEBI" id="CHEBI:15934"/>
    </ligand>
</feature>
<feature type="binding site" evidence="1">
    <location>
        <position position="128"/>
    </location>
    <ligand>
        <name>(2S)-2-hydroxy-3-oxobutyl phosphate</name>
        <dbReference type="ChEBI" id="CHEBI:58830"/>
    </ligand>
</feature>
<sequence>MSGGAGVPDLPQIDASGMKVGIVASTWHSTICDALLDGALKVTESANVSEPTVVRVLGAIEIPVVAQALAADHEAVIALGVVIRGQTPHFDYVCDAVTQGLTRVSLDASTPVANGVLTTNTEEQALDRAGLPGSAEDKGAQAAAAALSTALTLQGLRGRS</sequence>
<comment type="function">
    <text evidence="1">Catalyzes the formation of 6,7-dimethyl-8-ribityllumazine by condensation of 5-amino-6-(D-ribitylamino)uracil with 3,4-dihydroxy-2-butanone 4-phosphate. This is the penultimate step in the biosynthesis of riboflavin.</text>
</comment>
<comment type="catalytic activity">
    <reaction evidence="1">
        <text>(2S)-2-hydroxy-3-oxobutyl phosphate + 5-amino-6-(D-ribitylamino)uracil = 6,7-dimethyl-8-(1-D-ribityl)lumazine + phosphate + 2 H2O + H(+)</text>
        <dbReference type="Rhea" id="RHEA:26152"/>
        <dbReference type="ChEBI" id="CHEBI:15377"/>
        <dbReference type="ChEBI" id="CHEBI:15378"/>
        <dbReference type="ChEBI" id="CHEBI:15934"/>
        <dbReference type="ChEBI" id="CHEBI:43474"/>
        <dbReference type="ChEBI" id="CHEBI:58201"/>
        <dbReference type="ChEBI" id="CHEBI:58830"/>
        <dbReference type="EC" id="2.5.1.78"/>
    </reaction>
</comment>
<comment type="pathway">
    <text evidence="1">Cofactor biosynthesis; riboflavin biosynthesis; riboflavin from 2-hydroxy-3-oxobutyl phosphate and 5-amino-6-(D-ribitylamino)uracil: step 1/2.</text>
</comment>
<comment type="subunit">
    <text evidence="1">Homopentamer.</text>
</comment>
<comment type="similarity">
    <text evidence="1">Belongs to the DMRL synthase family.</text>
</comment>
<reference key="1">
    <citation type="submission" date="2006-12" db="EMBL/GenBank/DDBJ databases">
        <title>Complete sequence of chromosome of Mycobacterium sp. KMS.</title>
        <authorList>
            <consortium name="US DOE Joint Genome Institute"/>
            <person name="Copeland A."/>
            <person name="Lucas S."/>
            <person name="Lapidus A."/>
            <person name="Barry K."/>
            <person name="Detter J.C."/>
            <person name="Glavina del Rio T."/>
            <person name="Hammon N."/>
            <person name="Israni S."/>
            <person name="Dalin E."/>
            <person name="Tice H."/>
            <person name="Pitluck S."/>
            <person name="Kiss H."/>
            <person name="Brettin T."/>
            <person name="Bruce D."/>
            <person name="Han C."/>
            <person name="Tapia R."/>
            <person name="Gilna P."/>
            <person name="Schmutz J."/>
            <person name="Larimer F."/>
            <person name="Land M."/>
            <person name="Hauser L."/>
            <person name="Kyrpides N."/>
            <person name="Mikhailova N."/>
            <person name="Miller C.D."/>
            <person name="Richardson P."/>
        </authorList>
    </citation>
    <scope>NUCLEOTIDE SEQUENCE [LARGE SCALE GENOMIC DNA]</scope>
    <source>
        <strain>KMS</strain>
    </source>
</reference>
<organism>
    <name type="scientific">Mycobacterium sp. (strain KMS)</name>
    <dbReference type="NCBI Taxonomy" id="189918"/>
    <lineage>
        <taxon>Bacteria</taxon>
        <taxon>Bacillati</taxon>
        <taxon>Actinomycetota</taxon>
        <taxon>Actinomycetes</taxon>
        <taxon>Mycobacteriales</taxon>
        <taxon>Mycobacteriaceae</taxon>
        <taxon>Mycobacterium</taxon>
    </lineage>
</organism>
<accession>A1UFM8</accession>
<proteinExistence type="inferred from homology"/>
<protein>
    <recommendedName>
        <fullName evidence="1">6,7-dimethyl-8-ribityllumazine synthase</fullName>
        <shortName evidence="1">DMRL synthase</shortName>
        <shortName evidence="1">LS</shortName>
        <shortName evidence="1">Lumazine synthase</shortName>
        <ecNumber evidence="1">2.5.1.78</ecNumber>
    </recommendedName>
</protein>
<name>RISB_MYCSK</name>
<evidence type="ECO:0000255" key="1">
    <source>
        <dbReference type="HAMAP-Rule" id="MF_00178"/>
    </source>
</evidence>
<gene>
    <name evidence="1" type="primary">ribH</name>
    <name type="ordered locus">Mkms_2438</name>
</gene>
<keyword id="KW-0686">Riboflavin biosynthesis</keyword>
<keyword id="KW-0808">Transferase</keyword>
<dbReference type="EC" id="2.5.1.78" evidence="1"/>
<dbReference type="EMBL" id="CP000518">
    <property type="protein sequence ID" value="ABL91636.1"/>
    <property type="molecule type" value="Genomic_DNA"/>
</dbReference>
<dbReference type="SMR" id="A1UFM8"/>
<dbReference type="STRING" id="189918.Mkms_2438"/>
<dbReference type="KEGG" id="mkm:Mkms_2438"/>
<dbReference type="HOGENOM" id="CLU_089358_1_2_11"/>
<dbReference type="OrthoDB" id="9809709at2"/>
<dbReference type="UniPathway" id="UPA00275">
    <property type="reaction ID" value="UER00404"/>
</dbReference>
<dbReference type="GO" id="GO:0005829">
    <property type="term" value="C:cytosol"/>
    <property type="evidence" value="ECO:0007669"/>
    <property type="project" value="TreeGrafter"/>
</dbReference>
<dbReference type="GO" id="GO:0009349">
    <property type="term" value="C:riboflavin synthase complex"/>
    <property type="evidence" value="ECO:0007669"/>
    <property type="project" value="InterPro"/>
</dbReference>
<dbReference type="GO" id="GO:0000906">
    <property type="term" value="F:6,7-dimethyl-8-ribityllumazine synthase activity"/>
    <property type="evidence" value="ECO:0007669"/>
    <property type="project" value="UniProtKB-UniRule"/>
</dbReference>
<dbReference type="GO" id="GO:0009231">
    <property type="term" value="P:riboflavin biosynthetic process"/>
    <property type="evidence" value="ECO:0007669"/>
    <property type="project" value="UniProtKB-UniRule"/>
</dbReference>
<dbReference type="CDD" id="cd09209">
    <property type="entry name" value="Lumazine_synthase-I"/>
    <property type="match status" value="1"/>
</dbReference>
<dbReference type="Gene3D" id="3.40.50.960">
    <property type="entry name" value="Lumazine/riboflavin synthase"/>
    <property type="match status" value="1"/>
</dbReference>
<dbReference type="HAMAP" id="MF_00178">
    <property type="entry name" value="Lumazine_synth"/>
    <property type="match status" value="1"/>
</dbReference>
<dbReference type="InterPro" id="IPR034964">
    <property type="entry name" value="LS"/>
</dbReference>
<dbReference type="InterPro" id="IPR002180">
    <property type="entry name" value="LS/RS"/>
</dbReference>
<dbReference type="InterPro" id="IPR036467">
    <property type="entry name" value="LS/RS_sf"/>
</dbReference>
<dbReference type="NCBIfam" id="TIGR00114">
    <property type="entry name" value="lumazine-synth"/>
    <property type="match status" value="1"/>
</dbReference>
<dbReference type="PANTHER" id="PTHR21058:SF0">
    <property type="entry name" value="6,7-DIMETHYL-8-RIBITYLLUMAZINE SYNTHASE"/>
    <property type="match status" value="1"/>
</dbReference>
<dbReference type="PANTHER" id="PTHR21058">
    <property type="entry name" value="6,7-DIMETHYL-8-RIBITYLLUMAZINE SYNTHASE DMRL SYNTHASE LUMAZINE SYNTHASE"/>
    <property type="match status" value="1"/>
</dbReference>
<dbReference type="Pfam" id="PF00885">
    <property type="entry name" value="DMRL_synthase"/>
    <property type="match status" value="1"/>
</dbReference>
<dbReference type="SUPFAM" id="SSF52121">
    <property type="entry name" value="Lumazine synthase"/>
    <property type="match status" value="1"/>
</dbReference>